<name>MDTD_ECOSM</name>
<reference key="1">
    <citation type="journal article" date="2008" name="J. Bacteriol.">
        <title>Insights into the environmental resistance gene pool from the genome sequence of the multidrug-resistant environmental isolate Escherichia coli SMS-3-5.</title>
        <authorList>
            <person name="Fricke W.F."/>
            <person name="Wright M.S."/>
            <person name="Lindell A.H."/>
            <person name="Harkins D.M."/>
            <person name="Baker-Austin C."/>
            <person name="Ravel J."/>
            <person name="Stepanauskas R."/>
        </authorList>
    </citation>
    <scope>NUCLEOTIDE SEQUENCE [LARGE SCALE GENOMIC DNA]</scope>
    <source>
        <strain>SMS-3-5 / SECEC</strain>
    </source>
</reference>
<sequence length="471" mass="50923">MTDLPDSTRWQLWIVAFGFFMQSLDTTIVNTALPSMAQSLGESPLHMHMVIVSYVLTVAVMLPASGWLADKVGVRNIFFTAIVLFTLGSLFCALSGTLNELLLARALQGVGGAMMVPVGRLTVMKIVPREQYMAAMTFVTLPGQVGPLLGPALGGLLVEYASWHWIFLINIPVGIIGAIATLMLMPNYTMQTRRFDLSGFLLLAVGMAVLTLALDGSKGTGLSPLAIAGLVAVGVVALVLYLLHARNNNRALFSLKLFRTRTFSLGLAGSFAGRIGSGMLPFMTPVFLQIGLGFSPFHAGLMMIPMVLGSMGMKRIVVQVVNRFGYRRVLVATTLGLSLVTLLFMTTALLGWYYVLPFVLFLQGMVNSTRFSSMNTLTLKDLPDNLASSGNSLLSMIMQLSMSIGVTIAGLLLGLFGSQHVSVDSGTTQTVFMYTWLSMAFIIALPAFIFARVPNDTHQNVAISRRKRSAQ</sequence>
<comment type="subcellular location">
    <subcellularLocation>
        <location evidence="1">Cell inner membrane</location>
        <topology evidence="1">Multi-pass membrane protein</topology>
    </subcellularLocation>
</comment>
<comment type="similarity">
    <text evidence="1">Belongs to the major facilitator superfamily. TCR/Tet family.</text>
</comment>
<proteinExistence type="inferred from homology"/>
<keyword id="KW-0997">Cell inner membrane</keyword>
<keyword id="KW-1003">Cell membrane</keyword>
<keyword id="KW-0472">Membrane</keyword>
<keyword id="KW-0812">Transmembrane</keyword>
<keyword id="KW-1133">Transmembrane helix</keyword>
<keyword id="KW-0813">Transport</keyword>
<evidence type="ECO:0000255" key="1">
    <source>
        <dbReference type="HAMAP-Rule" id="MF_01577"/>
    </source>
</evidence>
<protein>
    <recommendedName>
        <fullName evidence="1">Putative multidrug resistance protein MdtD</fullName>
    </recommendedName>
</protein>
<gene>
    <name evidence="1" type="primary">mdtD</name>
    <name type="ordered locus">EcSMS35_0983</name>
</gene>
<accession>B1LNW4</accession>
<feature type="chain" id="PRO_0000365280" description="Putative multidrug resistance protein MdtD">
    <location>
        <begin position="1"/>
        <end position="471"/>
    </location>
</feature>
<feature type="topological domain" description="Periplasmic" evidence="1">
    <location>
        <begin position="1"/>
        <end position="11"/>
    </location>
</feature>
<feature type="transmembrane region" description="Helical" evidence="1">
    <location>
        <begin position="12"/>
        <end position="32"/>
    </location>
</feature>
<feature type="topological domain" description="Cytoplasmic" evidence="1">
    <location>
        <begin position="33"/>
        <end position="48"/>
    </location>
</feature>
<feature type="transmembrane region" description="Helical" evidence="1">
    <location>
        <begin position="49"/>
        <end position="69"/>
    </location>
</feature>
<feature type="topological domain" description="Periplasmic" evidence="1">
    <location>
        <begin position="70"/>
        <end position="76"/>
    </location>
</feature>
<feature type="transmembrane region" description="Helical" evidence="1">
    <location>
        <begin position="77"/>
        <end position="97"/>
    </location>
</feature>
<feature type="topological domain" description="Cytoplasmic" evidence="1">
    <location>
        <begin position="98"/>
        <end position="101"/>
    </location>
</feature>
<feature type="transmembrane region" description="Helical" evidence="1">
    <location>
        <begin position="102"/>
        <end position="124"/>
    </location>
</feature>
<feature type="topological domain" description="Periplasmic" evidence="1">
    <location>
        <begin position="125"/>
        <end position="137"/>
    </location>
</feature>
<feature type="transmembrane region" description="Helical" evidence="1">
    <location>
        <begin position="138"/>
        <end position="158"/>
    </location>
</feature>
<feature type="topological domain" description="Cytoplasmic" evidence="1">
    <location>
        <begin position="159"/>
        <end position="164"/>
    </location>
</feature>
<feature type="transmembrane region" description="Helical" evidence="1">
    <location>
        <begin position="165"/>
        <end position="185"/>
    </location>
</feature>
<feature type="topological domain" description="Periplasmic" evidence="1">
    <location>
        <begin position="186"/>
        <end position="196"/>
    </location>
</feature>
<feature type="transmembrane region" description="Helical" evidence="1">
    <location>
        <begin position="197"/>
        <end position="217"/>
    </location>
</feature>
<feature type="topological domain" description="Cytoplasmic" evidence="1">
    <location>
        <begin position="218"/>
        <end position="224"/>
    </location>
</feature>
<feature type="transmembrane region" description="Helical" evidence="1">
    <location>
        <begin position="225"/>
        <end position="245"/>
    </location>
</feature>
<feature type="topological domain" description="Periplasmic" evidence="1">
    <location>
        <begin position="246"/>
        <end position="262"/>
    </location>
</feature>
<feature type="transmembrane region" description="Helical" evidence="1">
    <location>
        <begin position="263"/>
        <end position="283"/>
    </location>
</feature>
<feature type="topological domain" description="Cytoplasmic" evidence="1">
    <location>
        <begin position="284"/>
        <end position="285"/>
    </location>
</feature>
<feature type="transmembrane region" description="Helical" evidence="1">
    <location>
        <begin position="286"/>
        <end position="306"/>
    </location>
</feature>
<feature type="topological domain" description="Periplasmic" evidence="1">
    <location>
        <begin position="307"/>
        <end position="341"/>
    </location>
</feature>
<feature type="transmembrane region" description="Helical" evidence="1">
    <location>
        <begin position="342"/>
        <end position="362"/>
    </location>
</feature>
<feature type="topological domain" description="Cytoplasmic" evidence="1">
    <location>
        <begin position="363"/>
        <end position="395"/>
    </location>
</feature>
<feature type="transmembrane region" description="Helical" evidence="1">
    <location>
        <begin position="396"/>
        <end position="416"/>
    </location>
</feature>
<feature type="topological domain" description="Periplasmic" evidence="1">
    <location>
        <begin position="417"/>
        <end position="430"/>
    </location>
</feature>
<feature type="transmembrane region" description="Helical" evidence="1">
    <location>
        <begin position="431"/>
        <end position="451"/>
    </location>
</feature>
<feature type="topological domain" description="Cytoplasmic" evidence="1">
    <location>
        <begin position="452"/>
        <end position="471"/>
    </location>
</feature>
<dbReference type="EMBL" id="CP000970">
    <property type="protein sequence ID" value="ACB18713.1"/>
    <property type="molecule type" value="Genomic_DNA"/>
</dbReference>
<dbReference type="RefSeq" id="WP_000130874.1">
    <property type="nucleotide sequence ID" value="NC_010498.1"/>
</dbReference>
<dbReference type="SMR" id="B1LNW4"/>
<dbReference type="KEGG" id="ecm:EcSMS35_0983"/>
<dbReference type="HOGENOM" id="CLU_000960_28_0_6"/>
<dbReference type="Proteomes" id="UP000007011">
    <property type="component" value="Chromosome"/>
</dbReference>
<dbReference type="GO" id="GO:0005886">
    <property type="term" value="C:plasma membrane"/>
    <property type="evidence" value="ECO:0007669"/>
    <property type="project" value="UniProtKB-SubCell"/>
</dbReference>
<dbReference type="GO" id="GO:0022857">
    <property type="term" value="F:transmembrane transporter activity"/>
    <property type="evidence" value="ECO:0007669"/>
    <property type="project" value="UniProtKB-UniRule"/>
</dbReference>
<dbReference type="CDD" id="cd17503">
    <property type="entry name" value="MFS_LmrB_MDR_like"/>
    <property type="match status" value="1"/>
</dbReference>
<dbReference type="FunFam" id="1.20.1250.20:FF:000021">
    <property type="entry name" value="Putative multidrug resistance protein MdtD"/>
    <property type="match status" value="1"/>
</dbReference>
<dbReference type="FunFam" id="1.20.1720.10:FF:000001">
    <property type="entry name" value="Putative multidrug resistance protein MdtD"/>
    <property type="match status" value="1"/>
</dbReference>
<dbReference type="Gene3D" id="1.20.1250.20">
    <property type="entry name" value="MFS general substrate transporter like domains"/>
    <property type="match status" value="1"/>
</dbReference>
<dbReference type="Gene3D" id="1.20.1720.10">
    <property type="entry name" value="Multidrug resistance protein D"/>
    <property type="match status" value="1"/>
</dbReference>
<dbReference type="HAMAP" id="MF_01577">
    <property type="entry name" value="MFS_MdtD"/>
    <property type="match status" value="1"/>
</dbReference>
<dbReference type="InterPro" id="IPR004638">
    <property type="entry name" value="EmrB-like"/>
</dbReference>
<dbReference type="InterPro" id="IPR011701">
    <property type="entry name" value="MFS"/>
</dbReference>
<dbReference type="InterPro" id="IPR020846">
    <property type="entry name" value="MFS_dom"/>
</dbReference>
<dbReference type="InterPro" id="IPR036259">
    <property type="entry name" value="MFS_trans_sf"/>
</dbReference>
<dbReference type="InterPro" id="IPR023721">
    <property type="entry name" value="Multi-R_MdtD"/>
</dbReference>
<dbReference type="NCBIfam" id="TIGR00711">
    <property type="entry name" value="efflux_EmrB"/>
    <property type="match status" value="1"/>
</dbReference>
<dbReference type="NCBIfam" id="NF007799">
    <property type="entry name" value="PRK10504.1"/>
    <property type="match status" value="1"/>
</dbReference>
<dbReference type="PANTHER" id="PTHR42718:SF46">
    <property type="entry name" value="BLR6921 PROTEIN"/>
    <property type="match status" value="1"/>
</dbReference>
<dbReference type="PANTHER" id="PTHR42718">
    <property type="entry name" value="MAJOR FACILITATOR SUPERFAMILY MULTIDRUG TRANSPORTER MFSC"/>
    <property type="match status" value="1"/>
</dbReference>
<dbReference type="Pfam" id="PF07690">
    <property type="entry name" value="MFS_1"/>
    <property type="match status" value="1"/>
</dbReference>
<dbReference type="PRINTS" id="PR01036">
    <property type="entry name" value="TCRTETB"/>
</dbReference>
<dbReference type="SUPFAM" id="SSF103473">
    <property type="entry name" value="MFS general substrate transporter"/>
    <property type="match status" value="1"/>
</dbReference>
<dbReference type="PROSITE" id="PS50850">
    <property type="entry name" value="MFS"/>
    <property type="match status" value="1"/>
</dbReference>
<organism>
    <name type="scientific">Escherichia coli (strain SMS-3-5 / SECEC)</name>
    <dbReference type="NCBI Taxonomy" id="439855"/>
    <lineage>
        <taxon>Bacteria</taxon>
        <taxon>Pseudomonadati</taxon>
        <taxon>Pseudomonadota</taxon>
        <taxon>Gammaproteobacteria</taxon>
        <taxon>Enterobacterales</taxon>
        <taxon>Enterobacteriaceae</taxon>
        <taxon>Escherichia</taxon>
    </lineage>
</organism>